<protein>
    <recommendedName>
        <fullName evidence="10">TNF receptor-associated factor homolog 1a</fullName>
    </recommendedName>
    <alternativeName>
        <fullName evidence="10">MATH domain-containing protein At5g43560</fullName>
    </alternativeName>
    <alternativeName>
        <fullName evidence="7">Protein MUTANT SNC1-ENHANCING 14</fullName>
    </alternativeName>
</protein>
<feature type="chain" id="PRO_0000398602" description="TNF receptor-associated factor homolog 1a">
    <location>
        <begin position="1"/>
        <end position="1055"/>
    </location>
</feature>
<feature type="domain" description="MATH" evidence="2">
    <location>
        <begin position="68"/>
        <end position="191"/>
    </location>
</feature>
<feature type="region of interest" description="Disordered" evidence="3">
    <location>
        <begin position="1"/>
        <end position="56"/>
    </location>
</feature>
<feature type="region of interest" description="Disordered" evidence="3">
    <location>
        <begin position="352"/>
        <end position="380"/>
    </location>
</feature>
<feature type="region of interest" description="Disordered" evidence="3">
    <location>
        <begin position="431"/>
        <end position="590"/>
    </location>
</feature>
<feature type="region of interest" description="Disordered" evidence="3">
    <location>
        <begin position="603"/>
        <end position="772"/>
    </location>
</feature>
<feature type="region of interest" description="Disordered" evidence="3">
    <location>
        <begin position="820"/>
        <end position="845"/>
    </location>
</feature>
<feature type="coiled-coil region" evidence="1">
    <location>
        <begin position="441"/>
        <end position="496"/>
    </location>
</feature>
<feature type="compositionally biased region" description="Polar residues" evidence="3">
    <location>
        <begin position="37"/>
        <end position="46"/>
    </location>
</feature>
<feature type="compositionally biased region" description="Basic and acidic residues" evidence="3">
    <location>
        <begin position="433"/>
        <end position="446"/>
    </location>
</feature>
<feature type="compositionally biased region" description="Basic residues" evidence="3">
    <location>
        <begin position="447"/>
        <end position="460"/>
    </location>
</feature>
<feature type="compositionally biased region" description="Basic and acidic residues" evidence="3">
    <location>
        <begin position="461"/>
        <end position="486"/>
    </location>
</feature>
<feature type="compositionally biased region" description="Low complexity" evidence="3">
    <location>
        <begin position="502"/>
        <end position="513"/>
    </location>
</feature>
<feature type="compositionally biased region" description="Basic and acidic residues" evidence="3">
    <location>
        <begin position="524"/>
        <end position="537"/>
    </location>
</feature>
<feature type="compositionally biased region" description="Polar residues" evidence="3">
    <location>
        <begin position="569"/>
        <end position="586"/>
    </location>
</feature>
<feature type="compositionally biased region" description="Basic and acidic residues" evidence="3">
    <location>
        <begin position="657"/>
        <end position="668"/>
    </location>
</feature>
<feature type="compositionally biased region" description="Polar residues" evidence="3">
    <location>
        <begin position="723"/>
        <end position="740"/>
    </location>
</feature>
<feature type="compositionally biased region" description="Polar residues" evidence="3">
    <location>
        <begin position="823"/>
        <end position="845"/>
    </location>
</feature>
<feature type="splice variant" id="VSP_039773" description="In isoform 2." evidence="9">
    <location>
        <begin position="1"/>
        <end position="464"/>
    </location>
</feature>
<feature type="sequence conflict" description="In Ref. 5; BAH19724." evidence="10" ref="5">
    <original>E</original>
    <variation>G</variation>
    <location>
        <position position="349"/>
    </location>
</feature>
<feature type="sequence conflict" description="In Ref. 5; BAH19724." evidence="10" ref="5">
    <original>A</original>
    <variation>T</variation>
    <location>
        <position position="453"/>
    </location>
</feature>
<reference key="1">
    <citation type="journal article" date="1998" name="DNA Res.">
        <title>Structural analysis of Arabidopsis thaliana chromosome 5. VIII. Sequence features of the regions of 1,081,958 bp covered by seventeen physically assigned P1 and TAC clones.</title>
        <authorList>
            <person name="Asamizu E."/>
            <person name="Sato S."/>
            <person name="Kaneko T."/>
            <person name="Nakamura Y."/>
            <person name="Kotani H."/>
            <person name="Miyajima N."/>
            <person name="Tabata S."/>
        </authorList>
    </citation>
    <scope>NUCLEOTIDE SEQUENCE [LARGE SCALE GENOMIC DNA]</scope>
    <source>
        <strain>cv. Columbia</strain>
    </source>
</reference>
<reference key="2">
    <citation type="journal article" date="2017" name="Plant J.">
        <title>Araport11: a complete reannotation of the Arabidopsis thaliana reference genome.</title>
        <authorList>
            <person name="Cheng C.Y."/>
            <person name="Krishnakumar V."/>
            <person name="Chan A.P."/>
            <person name="Thibaud-Nissen F."/>
            <person name="Schobel S."/>
            <person name="Town C.D."/>
        </authorList>
    </citation>
    <scope>GENOME REANNOTATION</scope>
    <source>
        <strain>cv. Columbia</strain>
    </source>
</reference>
<reference key="3">
    <citation type="journal article" date="2003" name="Science">
        <title>Empirical analysis of transcriptional activity in the Arabidopsis genome.</title>
        <authorList>
            <person name="Yamada K."/>
            <person name="Lim J."/>
            <person name="Dale J.M."/>
            <person name="Chen H."/>
            <person name="Shinn P."/>
            <person name="Palm C.J."/>
            <person name="Southwick A.M."/>
            <person name="Wu H.C."/>
            <person name="Kim C.J."/>
            <person name="Nguyen M."/>
            <person name="Pham P.K."/>
            <person name="Cheuk R.F."/>
            <person name="Karlin-Newmann G."/>
            <person name="Liu S.X."/>
            <person name="Lam B."/>
            <person name="Sakano H."/>
            <person name="Wu T."/>
            <person name="Yu G."/>
            <person name="Miranda M."/>
            <person name="Quach H.L."/>
            <person name="Tripp M."/>
            <person name="Chang C.H."/>
            <person name="Lee J.M."/>
            <person name="Toriumi M.J."/>
            <person name="Chan M.M."/>
            <person name="Tang C.C."/>
            <person name="Onodera C.S."/>
            <person name="Deng J.M."/>
            <person name="Akiyama K."/>
            <person name="Ansari Y."/>
            <person name="Arakawa T."/>
            <person name="Banh J."/>
            <person name="Banno F."/>
            <person name="Bowser L."/>
            <person name="Brooks S.Y."/>
            <person name="Carninci P."/>
            <person name="Chao Q."/>
            <person name="Choy N."/>
            <person name="Enju A."/>
            <person name="Goldsmith A.D."/>
            <person name="Gurjal M."/>
            <person name="Hansen N.F."/>
            <person name="Hayashizaki Y."/>
            <person name="Johnson-Hopson C."/>
            <person name="Hsuan V.W."/>
            <person name="Iida K."/>
            <person name="Karnes M."/>
            <person name="Khan S."/>
            <person name="Koesema E."/>
            <person name="Ishida J."/>
            <person name="Jiang P.X."/>
            <person name="Jones T."/>
            <person name="Kawai J."/>
            <person name="Kamiya A."/>
            <person name="Meyers C."/>
            <person name="Nakajima M."/>
            <person name="Narusaka M."/>
            <person name="Seki M."/>
            <person name="Sakurai T."/>
            <person name="Satou M."/>
            <person name="Tamse R."/>
            <person name="Vaysberg M."/>
            <person name="Wallender E.K."/>
            <person name="Wong C."/>
            <person name="Yamamura Y."/>
            <person name="Yuan S."/>
            <person name="Shinozaki K."/>
            <person name="Davis R.W."/>
            <person name="Theologis A."/>
            <person name="Ecker J.R."/>
        </authorList>
    </citation>
    <scope>NUCLEOTIDE SEQUENCE [LARGE SCALE MRNA] (ISOFORM 1)</scope>
    <source>
        <strain>cv. Columbia</strain>
    </source>
</reference>
<reference key="4">
    <citation type="submission" date="2006-07" db="EMBL/GenBank/DDBJ databases">
        <title>Large-scale analysis of RIKEN Arabidopsis full-length (RAFL) cDNAs.</title>
        <authorList>
            <person name="Totoki Y."/>
            <person name="Seki M."/>
            <person name="Ishida J."/>
            <person name="Nakajima M."/>
            <person name="Enju A."/>
            <person name="Kamiya A."/>
            <person name="Narusaka M."/>
            <person name="Shin-i T."/>
            <person name="Nakagawa M."/>
            <person name="Sakamoto N."/>
            <person name="Oishi K."/>
            <person name="Kohara Y."/>
            <person name="Kobayashi M."/>
            <person name="Toyoda A."/>
            <person name="Sakaki Y."/>
            <person name="Sakurai T."/>
            <person name="Iida K."/>
            <person name="Akiyama K."/>
            <person name="Satou M."/>
            <person name="Toyoda T."/>
            <person name="Konagaya A."/>
            <person name="Carninci P."/>
            <person name="Kawai J."/>
            <person name="Hayashizaki Y."/>
            <person name="Shinozaki K."/>
        </authorList>
    </citation>
    <scope>NUCLEOTIDE SEQUENCE [LARGE SCALE MRNA] (ISOFORM 2)</scope>
    <source>
        <strain>cv. Columbia</strain>
    </source>
</reference>
<reference key="5">
    <citation type="journal article" date="2009" name="DNA Res.">
        <title>Analysis of multiple occurrences of alternative splicing events in Arabidopsis thaliana using novel sequenced full-length cDNAs.</title>
        <authorList>
            <person name="Iida K."/>
            <person name="Fukami-Kobayashi K."/>
            <person name="Toyoda A."/>
            <person name="Sakaki Y."/>
            <person name="Kobayashi M."/>
            <person name="Seki M."/>
            <person name="Shinozaki K."/>
        </authorList>
    </citation>
    <scope>NUCLEOTIDE SEQUENCE [LARGE SCALE MRNA] OF 1-460 (ISOFORM 1)</scope>
    <source>
        <strain>cv. Columbia</strain>
    </source>
</reference>
<reference key="6">
    <citation type="journal article" date="2008" name="J. Proteome Res.">
        <title>Toward an interaction map of the two-component signaling pathway of Arabidopsis thaliana.</title>
        <authorList>
            <person name="Dortay H."/>
            <person name="Gruhn N."/>
            <person name="Pfeifer A."/>
            <person name="Schwerdtner M."/>
            <person name="Schmuelling T."/>
            <person name="Heyl A."/>
        </authorList>
    </citation>
    <scope>INTERACTION WITH AHK3</scope>
</reference>
<reference key="7">
    <citation type="journal article" date="2016" name="Cell Host Microbe">
        <title>Plant TRAF proteins regulate NLR immune receptor turnover.</title>
        <authorList>
            <person name="Huang S."/>
            <person name="Chen X."/>
            <person name="Zhong X."/>
            <person name="Li M."/>
            <person name="Ao K."/>
            <person name="Huang J."/>
            <person name="Li X."/>
        </authorList>
    </citation>
    <scope>FUNCTION</scope>
    <scope>DISRUPTION PHENOTYPE</scope>
</reference>
<reference key="8">
    <citation type="journal article" date="2017" name="Plant Cell">
        <title>TRAF family proteins regulate autophagy dynamics by modulating AUTOPHAGY PROTEIN6 stability in Arabidopsis.</title>
        <authorList>
            <person name="Qi H."/>
            <person name="Xia F.N."/>
            <person name="Xie L.J."/>
            <person name="Yu L.J."/>
            <person name="Chen Q.F."/>
            <person name="Zhuang X.H."/>
            <person name="Wang Q."/>
            <person name="Li F."/>
            <person name="Jiang L."/>
            <person name="Xie Q."/>
            <person name="Xiao S."/>
        </authorList>
    </citation>
    <scope>FUNCTION</scope>
    <scope>INTERACTION WITH ATG6; SINAT1; SINAT2; SINAT5 AND SINAT6</scope>
    <scope>SUBCELLULAR LOCATION</scope>
    <scope>DISRUPTION PHENOTYPE</scope>
</reference>
<comment type="function">
    <text evidence="5 6">Functions redundantly with TRAF1B in the regulation of plant immune response. Contributes to the turnover of the nucleotide-binding domain and leucine-rich repeat-containing (NB-LRR) immune receptors SNC1 and RPS2. May associate with an E3 ubiquitin-protein ligase complex, which modulates ubiquitination and subsequent degradation of NB-LRR immune sensors to maintain their homeostasis (PubMed:26867179). Functions redundantly with TRAF1B in the regulation of autophagosome formation. Required for SINAT1- and SINAT2-mediated ubiquitination and destabilization of ATG6. Functions as a molecular adapter that helps to regulate autophagy by modulating ATG6 stability (PubMed:28351989).</text>
</comment>
<comment type="subunit">
    <text evidence="4 6">Interacts with AHK3 (PubMed:18642946). Interacts with ATG6, SINAT1, SINAT2, SINAT5 and SINAT6 (PubMed:28351989).</text>
</comment>
<comment type="subcellular location">
    <subcellularLocation>
        <location evidence="6">Cytoplasm</location>
    </subcellularLocation>
    <text evidence="6">Predominantly expressed in the cytoplasm. Associates with starvation-induced autophagosomes in continuous darkness.</text>
</comment>
<comment type="alternative products">
    <event type="alternative splicing"/>
    <isoform>
        <id>Q8RY18-1</id>
        <name>1</name>
        <sequence type="displayed"/>
    </isoform>
    <isoform>
        <id>Q8RY18-2</id>
        <name>2</name>
        <sequence type="described" ref="VSP_039773"/>
    </isoform>
</comment>
<comment type="disruption phenotype">
    <text evidence="5">No visible phenotype under normal growth conditions, but the double mutant plants traf1a and traf1b, or muse13 and muse14 are extremely dwarf when grown at room temperature.</text>
</comment>
<comment type="sequence caution" evidence="10">
    <conflict type="erroneous gene model prediction">
        <sequence resource="EMBL-CDS" id="BAB11619"/>
    </conflict>
</comment>
<proteinExistence type="evidence at protein level"/>
<evidence type="ECO:0000255" key="1"/>
<evidence type="ECO:0000255" key="2">
    <source>
        <dbReference type="PROSITE-ProRule" id="PRU00129"/>
    </source>
</evidence>
<evidence type="ECO:0000256" key="3">
    <source>
        <dbReference type="SAM" id="MobiDB-lite"/>
    </source>
</evidence>
<evidence type="ECO:0000269" key="4">
    <source>
    </source>
</evidence>
<evidence type="ECO:0000269" key="5">
    <source>
    </source>
</evidence>
<evidence type="ECO:0000269" key="6">
    <source>
    </source>
</evidence>
<evidence type="ECO:0000303" key="7">
    <source>
    </source>
</evidence>
<evidence type="ECO:0000303" key="8">
    <source>
    </source>
</evidence>
<evidence type="ECO:0000303" key="9">
    <source ref="4"/>
</evidence>
<evidence type="ECO:0000305" key="10"/>
<gene>
    <name evidence="8" type="primary">TRAF1A</name>
    <name evidence="7" type="synonym">MUSE14</name>
    <name type="ordered locus">At5g43560</name>
    <name type="ORF">K9D7.6</name>
</gene>
<name>TRF1A_ARATH</name>
<dbReference type="EMBL" id="AB016875">
    <property type="protein sequence ID" value="BAB11619.1"/>
    <property type="status" value="ALT_SEQ"/>
    <property type="molecule type" value="Genomic_DNA"/>
</dbReference>
<dbReference type="EMBL" id="CP002688">
    <property type="protein sequence ID" value="AED94981.1"/>
    <property type="molecule type" value="Genomic_DNA"/>
</dbReference>
<dbReference type="EMBL" id="CP002688">
    <property type="protein sequence ID" value="AED94982.1"/>
    <property type="molecule type" value="Genomic_DNA"/>
</dbReference>
<dbReference type="EMBL" id="AY078956">
    <property type="protein sequence ID" value="AAL84956.1"/>
    <property type="molecule type" value="mRNA"/>
</dbReference>
<dbReference type="EMBL" id="AK226901">
    <property type="protein sequence ID" value="BAE98978.1"/>
    <property type="molecule type" value="mRNA"/>
</dbReference>
<dbReference type="EMBL" id="AK317030">
    <property type="protein sequence ID" value="BAH19724.1"/>
    <property type="molecule type" value="mRNA"/>
</dbReference>
<dbReference type="RefSeq" id="NP_199169.1">
    <molecule id="Q8RY18-1"/>
    <property type="nucleotide sequence ID" value="NM_123722.5"/>
</dbReference>
<dbReference type="RefSeq" id="NP_851125.1">
    <molecule id="Q8RY18-1"/>
    <property type="nucleotide sequence ID" value="NM_180794.5"/>
</dbReference>
<dbReference type="SMR" id="Q8RY18"/>
<dbReference type="BioGRID" id="19626">
    <property type="interactions" value="2"/>
</dbReference>
<dbReference type="FunCoup" id="Q8RY18">
    <property type="interactions" value="1672"/>
</dbReference>
<dbReference type="IntAct" id="Q8RY18">
    <property type="interactions" value="1"/>
</dbReference>
<dbReference type="STRING" id="3702.Q8RY18"/>
<dbReference type="iPTMnet" id="Q8RY18"/>
<dbReference type="PaxDb" id="3702-AT5G43560.1"/>
<dbReference type="ProteomicsDB" id="228297">
    <molecule id="Q8RY18-1"/>
</dbReference>
<dbReference type="EnsemblPlants" id="AT5G43560.1">
    <molecule id="Q8RY18-1"/>
    <property type="protein sequence ID" value="AT5G43560.1"/>
    <property type="gene ID" value="AT5G43560"/>
</dbReference>
<dbReference type="EnsemblPlants" id="AT5G43560.2">
    <molecule id="Q8RY18-1"/>
    <property type="protein sequence ID" value="AT5G43560.2"/>
    <property type="gene ID" value="AT5G43560"/>
</dbReference>
<dbReference type="GeneID" id="834376"/>
<dbReference type="Gramene" id="AT5G43560.1">
    <molecule id="Q8RY18-1"/>
    <property type="protein sequence ID" value="AT5G43560.1"/>
    <property type="gene ID" value="AT5G43560"/>
</dbReference>
<dbReference type="Gramene" id="AT5G43560.2">
    <molecule id="Q8RY18-1"/>
    <property type="protein sequence ID" value="AT5G43560.2"/>
    <property type="gene ID" value="AT5G43560"/>
</dbReference>
<dbReference type="KEGG" id="ath:AT5G43560"/>
<dbReference type="Araport" id="AT5G43560"/>
<dbReference type="TAIR" id="AT5G43560">
    <property type="gene designation" value="MUSE14"/>
</dbReference>
<dbReference type="eggNOG" id="ENOG502QW6P">
    <property type="taxonomic scope" value="Eukaryota"/>
</dbReference>
<dbReference type="HOGENOM" id="CLU_005068_0_0_1"/>
<dbReference type="InParanoid" id="Q8RY18"/>
<dbReference type="OMA" id="NVEQICW"/>
<dbReference type="PhylomeDB" id="Q8RY18"/>
<dbReference type="PRO" id="PR:Q8RY18"/>
<dbReference type="Proteomes" id="UP000006548">
    <property type="component" value="Chromosome 5"/>
</dbReference>
<dbReference type="ExpressionAtlas" id="Q8RY18">
    <property type="expression patterns" value="baseline and differential"/>
</dbReference>
<dbReference type="GO" id="GO:0005737">
    <property type="term" value="C:cytoplasm"/>
    <property type="evidence" value="ECO:0000314"/>
    <property type="project" value="TAIR"/>
</dbReference>
<dbReference type="GO" id="GO:0043424">
    <property type="term" value="F:protein histidine kinase binding"/>
    <property type="evidence" value="ECO:0000353"/>
    <property type="project" value="UniProtKB"/>
</dbReference>
<dbReference type="GO" id="GO:1905037">
    <property type="term" value="P:autophagosome organization"/>
    <property type="evidence" value="ECO:0000315"/>
    <property type="project" value="TAIR"/>
</dbReference>
<dbReference type="GO" id="GO:0045087">
    <property type="term" value="P:innate immune response"/>
    <property type="evidence" value="ECO:0000316"/>
    <property type="project" value="TAIR"/>
</dbReference>
<dbReference type="CDD" id="cd00121">
    <property type="entry name" value="MATH"/>
    <property type="match status" value="1"/>
</dbReference>
<dbReference type="Gene3D" id="2.60.210.10">
    <property type="entry name" value="Apoptosis, Tumor Necrosis Factor Receptor Associated Protein 2, Chain A"/>
    <property type="match status" value="1"/>
</dbReference>
<dbReference type="InterPro" id="IPR002083">
    <property type="entry name" value="MATH/TRAF_dom"/>
</dbReference>
<dbReference type="InterPro" id="IPR008974">
    <property type="entry name" value="TRAF-like"/>
</dbReference>
<dbReference type="InterPro" id="IPR055327">
    <property type="entry name" value="TRAF1A/B"/>
</dbReference>
<dbReference type="PANTHER" id="PTHR47477">
    <property type="entry name" value="TNF RECEPTOR-ASSOCIATED FACTOR HOMOLOG 1A"/>
    <property type="match status" value="1"/>
</dbReference>
<dbReference type="PANTHER" id="PTHR47477:SF8">
    <property type="entry name" value="TNF RECEPTOR-ASSOCIATED FACTOR HOMOLOG 1A"/>
    <property type="match status" value="1"/>
</dbReference>
<dbReference type="Pfam" id="PF22486">
    <property type="entry name" value="MATH_2"/>
    <property type="match status" value="1"/>
</dbReference>
<dbReference type="SMART" id="SM00061">
    <property type="entry name" value="MATH"/>
    <property type="match status" value="1"/>
</dbReference>
<dbReference type="SUPFAM" id="SSF49599">
    <property type="entry name" value="TRAF domain-like"/>
    <property type="match status" value="1"/>
</dbReference>
<dbReference type="PROSITE" id="PS50144">
    <property type="entry name" value="MATH"/>
    <property type="match status" value="1"/>
</dbReference>
<sequence>MSESTNEDSGAGRSSLEENSNGQRSQSEEAIAEWRSSEQVENGTPSTSPPYWDIDDDDDFGSKPSQLFGKNTWTIEKFSDINKRELRGDVFEVGGYKWYILIYPQGCDVCNHLSLFLCVAHHEKLLPGWSHFAQFTIAVSNKDPKKSKHSDTLHRFWKKEHDWGWKKFIELPKLKEGFIDDSGCLTIKAQVQVIRERVDRPFRCLHYKYREELVRVYLGNVEQICWRFVEEKRSKLGRLIEDKAKWKSFCAFWMGLDQNSRRRMSREKMDVILKIVVKHFFVEKEVTSTLVMDSLYSGLKALEGQNKNKESRPRLMDTEESTAPIVSVDKDSFALVDDVLLLLEKAALEPLPKKEEKSSQNRTKDGNAGEEFSREAVERDDRRLTELGRRTVEIFVLAHIFSNKIEVAYQEAIAWKRQEELIREEEEAWLAESEQKGKRGASEKEKKSKKKQAKQKKNKNKGKEMRKEDKVRTQTEEREIEKEECVRAIAESSAEKPDTLGDVSDVSDSVDSSAEILQLDSEDRESSPVHWEMDASEVHPPSAGDTSRGRGNSFSIPNGVAERKGLSTMDDSSSTCSNDSIQSGVANGSYKGNVLNCQSQKWFSNGKIQPGKVSDSNSLASEKEHQPSRLASDPKNQSHSSDIRRVGEADIVISHIQKPESPKERSPVSKDPNMIQMKEKSAAVLSPSRAAPWNPPSPVQAKPEKKGVSNVEAVPNRKVISVKSPSSHHASPSREAQLQTVGPRADIQKIASPKPVEQPAPPMSRPLSAPIIPPTQAAPVISAVQTSTASLARSMSSTGRLGSPTHSQAYNPQSYKHAIVGSSGFTHPSSQSSGTSTLPPYSHPSPISVSNQSGFPINVGSWDVSSGGLLWTGGSSSTRDTTTTISGNHKTNTYNAPVVTTSIRPTNVQIGRTAQSLMTDEFPHLDIINDLLADEHGTMDNSVYRVPQQFNNQYSYHGGADLGISSRSRSYSDDGFHQSYGEYMPHSASSSPYGNGQTQSQWQMANMDFSLPAMRNQDDVSASATATYSYFDLDSSNPNLSGINGYRDFRPSNGH</sequence>
<keyword id="KW-0025">Alternative splicing</keyword>
<keyword id="KW-0175">Coiled coil</keyword>
<keyword id="KW-0963">Cytoplasm</keyword>
<keyword id="KW-1185">Reference proteome</keyword>
<organism>
    <name type="scientific">Arabidopsis thaliana</name>
    <name type="common">Mouse-ear cress</name>
    <dbReference type="NCBI Taxonomy" id="3702"/>
    <lineage>
        <taxon>Eukaryota</taxon>
        <taxon>Viridiplantae</taxon>
        <taxon>Streptophyta</taxon>
        <taxon>Embryophyta</taxon>
        <taxon>Tracheophyta</taxon>
        <taxon>Spermatophyta</taxon>
        <taxon>Magnoliopsida</taxon>
        <taxon>eudicotyledons</taxon>
        <taxon>Gunneridae</taxon>
        <taxon>Pentapetalae</taxon>
        <taxon>rosids</taxon>
        <taxon>malvids</taxon>
        <taxon>Brassicales</taxon>
        <taxon>Brassicaceae</taxon>
        <taxon>Camelineae</taxon>
        <taxon>Arabidopsis</taxon>
    </lineage>
</organism>
<accession>Q8RY18</accession>
<accession>B9DG57</accession>
<accession>Q0WV70</accession>
<accession>Q9FIY4</accession>